<organism>
    <name type="scientific">Oryza sativa subsp. japonica</name>
    <name type="common">Rice</name>
    <dbReference type="NCBI Taxonomy" id="39947"/>
    <lineage>
        <taxon>Eukaryota</taxon>
        <taxon>Viridiplantae</taxon>
        <taxon>Streptophyta</taxon>
        <taxon>Embryophyta</taxon>
        <taxon>Tracheophyta</taxon>
        <taxon>Spermatophyta</taxon>
        <taxon>Magnoliopsida</taxon>
        <taxon>Liliopsida</taxon>
        <taxon>Poales</taxon>
        <taxon>Poaceae</taxon>
        <taxon>BOP clade</taxon>
        <taxon>Oryzoideae</taxon>
        <taxon>Oryzeae</taxon>
        <taxon>Oryzinae</taxon>
        <taxon>Oryza</taxon>
        <taxon>Oryza sativa</taxon>
    </lineage>
</organism>
<evidence type="ECO:0000250" key="1"/>
<evidence type="ECO:0000250" key="2">
    <source>
        <dbReference type="UniProtKB" id="Q57815"/>
    </source>
</evidence>
<evidence type="ECO:0000250" key="3">
    <source>
        <dbReference type="UniProtKB" id="Q9M4A2"/>
    </source>
</evidence>
<evidence type="ECO:0000255" key="4">
    <source>
        <dbReference type="PROSITE-ProRule" id="PRU01385"/>
    </source>
</evidence>
<evidence type="ECO:0000269" key="5">
    <source>
    </source>
</evidence>
<evidence type="ECO:0000305" key="6"/>
<evidence type="ECO:0000305" key="7">
    <source>
    </source>
</evidence>
<sequence length="381" mass="43560">MAGREKRRRVAALDGEERRRRQEEAATLLHRIRGLVRWVVAEVAAGRSPTVALHRYQNYCSSASAAAASPCACSYDVPVGTDVLSLLHRGSHASRLNVLLRVLLVVQQLLQQNKHCSKRDIYYMYPSIFQEQAVVDRAINDICVLFKCSRHNLNVVPVAKGLVMGWIRFLEGEKEVYCVTNVNAAFSIPVSIEAIKDVVSVADYILIVEKETVFQRLANDKFCERNRCIVITGRGYPDIPTRRFLRYLVEQLHLPVYCLVDADPYGFDILATYKFGSLQLAYDANFLRVPDIRWLGVFTSDFEDYRLPDCCLLHLSSEDRRKAEGILSRCYLHREAPQWRLELEAMLQKGVKFEIEALSACSISFLSEEYIPKKIKQGRHI</sequence>
<protein>
    <recommendedName>
        <fullName>Meiotic recombination protein SPO11-1</fullName>
        <shortName>OsSPO11-1</shortName>
        <ecNumber evidence="3">5.6.2.2</ecNumber>
    </recommendedName>
    <alternativeName>
        <fullName>OsSPO11A</fullName>
    </alternativeName>
    <alternativeName>
        <fullName>Putative topoisomerase VI subunit A1</fullName>
        <shortName>OsTOP6A1</shortName>
    </alternativeName>
</protein>
<feature type="chain" id="PRO_0000429776" description="Meiotic recombination protein SPO11-1">
    <location>
        <begin position="1"/>
        <end position="381"/>
    </location>
</feature>
<feature type="domain" description="Topo IIA-type catalytic" evidence="4">
    <location>
        <begin position="23"/>
        <end position="162"/>
    </location>
</feature>
<feature type="active site" description="O-(5'-phospho-DNA)-tyrosine intermediate" evidence="4">
    <location>
        <position position="123"/>
    </location>
</feature>
<feature type="binding site" evidence="2">
    <location>
        <position position="209"/>
    </location>
    <ligand>
        <name>Mg(2+)</name>
        <dbReference type="ChEBI" id="CHEBI:18420"/>
    </ligand>
</feature>
<feature type="binding site" evidence="2">
    <location>
        <position position="261"/>
    </location>
    <ligand>
        <name>Mg(2+)</name>
        <dbReference type="ChEBI" id="CHEBI:18420"/>
    </ligand>
</feature>
<proteinExistence type="evidence at transcript level"/>
<gene>
    <name type="primary">SPO11-1</name>
    <name type="ordered locus">Os03g0752200</name>
    <name type="ordered locus">LOC_Os03g54084</name>
    <name type="ORF">OJ1112_G08.6</name>
    <name type="ORF">OsJ_12593</name>
    <name type="ORF">OSJNBa0047E24.8</name>
</gene>
<comment type="function">
    <text evidence="5">Required for meiotic recombination. Mediates DNA cleavage that forms the double-strand breaks (DSB) that initiate meiotic recombination. Is essential for both homologous chromosomes pairing and crossover formation during meiosis.</text>
</comment>
<comment type="catalytic activity">
    <reaction evidence="4">
        <text>ATP-dependent breakage, passage and rejoining of double-stranded DNA.</text>
        <dbReference type="EC" id="5.6.2.2"/>
    </reaction>
</comment>
<comment type="cofactor">
    <cofactor evidence="2">
        <name>Mg(2+)</name>
        <dbReference type="ChEBI" id="CHEBI:18420"/>
    </cofactor>
</comment>
<comment type="subcellular location">
    <subcellularLocation>
        <location evidence="1">Nucleus</location>
    </subcellularLocation>
</comment>
<comment type="miscellaneous">
    <text evidence="7">Plants silencing TPO6A1 have no apparent growth defects during vegetative development, but most of the plant are completely sterile due to empty and shrunken mature pollen grains, and defect in the macrospores.</text>
</comment>
<comment type="similarity">
    <text evidence="6">Belongs to the TOP6A family.</text>
</comment>
<reference key="1">
    <citation type="journal article" date="2011" name="PLoS ONE">
        <title>OsSpo11-4, a rice homologue of the archaeal TopVIA protein, mediates double-strand DNA cleavage and interacts with OsTopVIB.</title>
        <authorList>
            <person name="An X.J."/>
            <person name="Deng Z.Y."/>
            <person name="Wang T."/>
        </authorList>
    </citation>
    <scope>NUCLEOTIDE SEQUENCE [MRNA]</scope>
</reference>
<reference key="2">
    <citation type="submission" date="2005-06" db="EMBL/GenBank/DDBJ databases">
        <title>Isolation and characterization of rice SPO11 genes.</title>
        <authorList>
            <person name="Yamada K."/>
            <person name="Kawagishi-Kobayashi M."/>
            <person name="Shingu Y."/>
            <person name="Mikawa T."/>
            <person name="Wakasa K."/>
            <person name="Shibata T."/>
        </authorList>
    </citation>
    <scope>NUCLEOTIDE SEQUENCE [MRNA]</scope>
    <source>
        <strain>cv. Nipponbare</strain>
    </source>
</reference>
<reference key="3">
    <citation type="journal article" date="2005" name="Genome Res.">
        <title>Sequence, annotation, and analysis of synteny between rice chromosome 3 and diverged grass species.</title>
        <authorList>
            <consortium name="The rice chromosome 3 sequencing consortium"/>
            <person name="Buell C.R."/>
            <person name="Yuan Q."/>
            <person name="Ouyang S."/>
            <person name="Liu J."/>
            <person name="Zhu W."/>
            <person name="Wang A."/>
            <person name="Maiti R."/>
            <person name="Haas B."/>
            <person name="Wortman J."/>
            <person name="Pertea M."/>
            <person name="Jones K.M."/>
            <person name="Kim M."/>
            <person name="Overton L."/>
            <person name="Tsitrin T."/>
            <person name="Fadrosh D."/>
            <person name="Bera J."/>
            <person name="Weaver B."/>
            <person name="Jin S."/>
            <person name="Johri S."/>
            <person name="Reardon M."/>
            <person name="Webb K."/>
            <person name="Hill J."/>
            <person name="Moffat K."/>
            <person name="Tallon L."/>
            <person name="Van Aken S."/>
            <person name="Lewis M."/>
            <person name="Utterback T."/>
            <person name="Feldblyum T."/>
            <person name="Zismann V."/>
            <person name="Iobst S."/>
            <person name="Hsiao J."/>
            <person name="de Vazeille A.R."/>
            <person name="Salzberg S.L."/>
            <person name="White O."/>
            <person name="Fraser C.M."/>
            <person name="Yu Y."/>
            <person name="Kim H."/>
            <person name="Rambo T."/>
            <person name="Currie J."/>
            <person name="Collura K."/>
            <person name="Kernodle-Thompson S."/>
            <person name="Wei F."/>
            <person name="Kudrna K."/>
            <person name="Ammiraju J.S.S."/>
            <person name="Luo M."/>
            <person name="Goicoechea J.L."/>
            <person name="Wing R.A."/>
            <person name="Henry D."/>
            <person name="Oates R."/>
            <person name="Palmer M."/>
            <person name="Pries G."/>
            <person name="Saski C."/>
            <person name="Simmons J."/>
            <person name="Soderlund C."/>
            <person name="Nelson W."/>
            <person name="de la Bastide M."/>
            <person name="Spiegel L."/>
            <person name="Nascimento L."/>
            <person name="Huang E."/>
            <person name="Preston R."/>
            <person name="Zutavern T."/>
            <person name="Palmer L."/>
            <person name="O'Shaughnessy A."/>
            <person name="Dike S."/>
            <person name="McCombie W.R."/>
            <person name="Minx P."/>
            <person name="Cordum H."/>
            <person name="Wilson R."/>
            <person name="Jin W."/>
            <person name="Lee H.R."/>
            <person name="Jiang J."/>
            <person name="Jackson S."/>
        </authorList>
    </citation>
    <scope>NUCLEOTIDE SEQUENCE [LARGE SCALE GENOMIC DNA]</scope>
    <source>
        <strain>cv. Nipponbare</strain>
    </source>
</reference>
<reference key="4">
    <citation type="journal article" date="2005" name="Nature">
        <title>The map-based sequence of the rice genome.</title>
        <authorList>
            <consortium name="International rice genome sequencing project (IRGSP)"/>
        </authorList>
    </citation>
    <scope>NUCLEOTIDE SEQUENCE [LARGE SCALE GENOMIC DNA]</scope>
    <source>
        <strain>cv. Nipponbare</strain>
    </source>
</reference>
<reference key="5">
    <citation type="journal article" date="2008" name="Nucleic Acids Res.">
        <title>The rice annotation project database (RAP-DB): 2008 update.</title>
        <authorList>
            <consortium name="The rice annotation project (RAP)"/>
        </authorList>
    </citation>
    <scope>GENOME REANNOTATION</scope>
    <source>
        <strain>cv. Nipponbare</strain>
    </source>
</reference>
<reference key="6">
    <citation type="journal article" date="2013" name="Rice">
        <title>Improvement of the Oryza sativa Nipponbare reference genome using next generation sequence and optical map data.</title>
        <authorList>
            <person name="Kawahara Y."/>
            <person name="de la Bastide M."/>
            <person name="Hamilton J.P."/>
            <person name="Kanamori H."/>
            <person name="McCombie W.R."/>
            <person name="Ouyang S."/>
            <person name="Schwartz D.C."/>
            <person name="Tanaka T."/>
            <person name="Wu J."/>
            <person name="Zhou S."/>
            <person name="Childs K.L."/>
            <person name="Davidson R.M."/>
            <person name="Lin H."/>
            <person name="Quesada-Ocampo L."/>
            <person name="Vaillancourt B."/>
            <person name="Sakai H."/>
            <person name="Lee S.S."/>
            <person name="Kim J."/>
            <person name="Numa H."/>
            <person name="Itoh T."/>
            <person name="Buell C.R."/>
            <person name="Matsumoto T."/>
        </authorList>
    </citation>
    <scope>GENOME REANNOTATION</scope>
    <source>
        <strain>cv. Nipponbare</strain>
    </source>
</reference>
<reference key="7">
    <citation type="journal article" date="2005" name="PLoS Biol.">
        <title>The genomes of Oryza sativa: a history of duplications.</title>
        <authorList>
            <person name="Yu J."/>
            <person name="Wang J."/>
            <person name="Lin W."/>
            <person name="Li S."/>
            <person name="Li H."/>
            <person name="Zhou J."/>
            <person name="Ni P."/>
            <person name="Dong W."/>
            <person name="Hu S."/>
            <person name="Zeng C."/>
            <person name="Zhang J."/>
            <person name="Zhang Y."/>
            <person name="Li R."/>
            <person name="Xu Z."/>
            <person name="Li S."/>
            <person name="Li X."/>
            <person name="Zheng H."/>
            <person name="Cong L."/>
            <person name="Lin L."/>
            <person name="Yin J."/>
            <person name="Geng J."/>
            <person name="Li G."/>
            <person name="Shi J."/>
            <person name="Liu J."/>
            <person name="Lv H."/>
            <person name="Li J."/>
            <person name="Wang J."/>
            <person name="Deng Y."/>
            <person name="Ran L."/>
            <person name="Shi X."/>
            <person name="Wang X."/>
            <person name="Wu Q."/>
            <person name="Li C."/>
            <person name="Ren X."/>
            <person name="Wang J."/>
            <person name="Wang X."/>
            <person name="Li D."/>
            <person name="Liu D."/>
            <person name="Zhang X."/>
            <person name="Ji Z."/>
            <person name="Zhao W."/>
            <person name="Sun Y."/>
            <person name="Zhang Z."/>
            <person name="Bao J."/>
            <person name="Han Y."/>
            <person name="Dong L."/>
            <person name="Ji J."/>
            <person name="Chen P."/>
            <person name="Wu S."/>
            <person name="Liu J."/>
            <person name="Xiao Y."/>
            <person name="Bu D."/>
            <person name="Tan J."/>
            <person name="Yang L."/>
            <person name="Ye C."/>
            <person name="Zhang J."/>
            <person name="Xu J."/>
            <person name="Zhou Y."/>
            <person name="Yu Y."/>
            <person name="Zhang B."/>
            <person name="Zhuang S."/>
            <person name="Wei H."/>
            <person name="Liu B."/>
            <person name="Lei M."/>
            <person name="Yu H."/>
            <person name="Li Y."/>
            <person name="Xu H."/>
            <person name="Wei S."/>
            <person name="He X."/>
            <person name="Fang L."/>
            <person name="Zhang Z."/>
            <person name="Zhang Y."/>
            <person name="Huang X."/>
            <person name="Su Z."/>
            <person name="Tong W."/>
            <person name="Li J."/>
            <person name="Tong Z."/>
            <person name="Li S."/>
            <person name="Ye J."/>
            <person name="Wang L."/>
            <person name="Fang L."/>
            <person name="Lei T."/>
            <person name="Chen C.-S."/>
            <person name="Chen H.-C."/>
            <person name="Xu Z."/>
            <person name="Li H."/>
            <person name="Huang H."/>
            <person name="Zhang F."/>
            <person name="Xu H."/>
            <person name="Li N."/>
            <person name="Zhao C."/>
            <person name="Li S."/>
            <person name="Dong L."/>
            <person name="Huang Y."/>
            <person name="Li L."/>
            <person name="Xi Y."/>
            <person name="Qi Q."/>
            <person name="Li W."/>
            <person name="Zhang B."/>
            <person name="Hu W."/>
            <person name="Zhang Y."/>
            <person name="Tian X."/>
            <person name="Jiao Y."/>
            <person name="Liang X."/>
            <person name="Jin J."/>
            <person name="Gao L."/>
            <person name="Zheng W."/>
            <person name="Hao B."/>
            <person name="Liu S.-M."/>
            <person name="Wang W."/>
            <person name="Yuan L."/>
            <person name="Cao M."/>
            <person name="McDermott J."/>
            <person name="Samudrala R."/>
            <person name="Wang J."/>
            <person name="Wong G.K.-S."/>
            <person name="Yang H."/>
        </authorList>
    </citation>
    <scope>NUCLEOTIDE SEQUENCE [LARGE SCALE GENOMIC DNA]</scope>
    <source>
        <strain>cv. Nipponbare</strain>
    </source>
</reference>
<reference key="8">
    <citation type="journal article" date="2010" name="Chromosoma">
        <title>OsSPO11-1 is essential for both homologous chromosome pairing and crossover formation in rice.</title>
        <authorList>
            <person name="Yu H."/>
            <person name="Wang M."/>
            <person name="Tang D."/>
            <person name="Wang K."/>
            <person name="Chen F."/>
            <person name="Gong Z."/>
            <person name="Gu M."/>
            <person name="Cheng Z."/>
        </authorList>
    </citation>
    <scope>FUNCTION</scope>
    <source>
        <strain>cv. Yandao</strain>
    </source>
</reference>
<name>SPO11_ORYSJ</name>
<dbReference type="EC" id="5.6.2.2" evidence="3"/>
<dbReference type="EMBL" id="GU170363">
    <property type="protein sequence ID" value="ACZ52153.1"/>
    <property type="molecule type" value="mRNA"/>
</dbReference>
<dbReference type="EMBL" id="AB219537">
    <property type="protein sequence ID" value="BAF65344.1"/>
    <property type="molecule type" value="mRNA"/>
</dbReference>
<dbReference type="EMBL" id="AC092556">
    <property type="protein sequence ID" value="AAR87259.1"/>
    <property type="molecule type" value="Genomic_DNA"/>
</dbReference>
<dbReference type="EMBL" id="AC135225">
    <property type="protein sequence ID" value="AAP68363.1"/>
    <property type="molecule type" value="Genomic_DNA"/>
</dbReference>
<dbReference type="EMBL" id="DP000009">
    <property type="protein sequence ID" value="ABF98916.1"/>
    <property type="molecule type" value="Genomic_DNA"/>
</dbReference>
<dbReference type="EMBL" id="AP008209">
    <property type="protein sequence ID" value="BAH92371.1"/>
    <property type="molecule type" value="Genomic_DNA"/>
</dbReference>
<dbReference type="EMBL" id="AP014959">
    <property type="protein sequence ID" value="BAS86422.1"/>
    <property type="molecule type" value="Genomic_DNA"/>
</dbReference>
<dbReference type="EMBL" id="CM000140">
    <property type="protein sequence ID" value="EEE59941.1"/>
    <property type="molecule type" value="Genomic_DNA"/>
</dbReference>
<dbReference type="RefSeq" id="NP_001391702.1">
    <property type="nucleotide sequence ID" value="NM_001404773.1"/>
</dbReference>
<dbReference type="RefSeq" id="XP_015630524.1">
    <property type="nucleotide sequence ID" value="XM_015775038.1"/>
</dbReference>
<dbReference type="SMR" id="Q7Y021"/>
<dbReference type="FunCoup" id="Q7Y021">
    <property type="interactions" value="16"/>
</dbReference>
<dbReference type="STRING" id="39947.Q7Y021"/>
<dbReference type="PaxDb" id="39947-Q7Y021"/>
<dbReference type="EnsemblPlants" id="Os03t0752200-01">
    <property type="protein sequence ID" value="Os03t0752200-01"/>
    <property type="gene ID" value="Os03g0752200"/>
</dbReference>
<dbReference type="GeneID" id="9267055"/>
<dbReference type="Gramene" id="Os03t0752200-01">
    <property type="protein sequence ID" value="Os03t0752200-01"/>
    <property type="gene ID" value="Os03g0752200"/>
</dbReference>
<dbReference type="KEGG" id="dosa:Os03g0752200"/>
<dbReference type="eggNOG" id="KOG2795">
    <property type="taxonomic scope" value="Eukaryota"/>
</dbReference>
<dbReference type="HOGENOM" id="CLU_037229_1_1_1"/>
<dbReference type="InParanoid" id="Q7Y021"/>
<dbReference type="OMA" id="IYYLDPV"/>
<dbReference type="OrthoDB" id="5377392at2759"/>
<dbReference type="Proteomes" id="UP000000763">
    <property type="component" value="Chromosome 3"/>
</dbReference>
<dbReference type="Proteomes" id="UP000007752">
    <property type="component" value="Chromosome 3"/>
</dbReference>
<dbReference type="Proteomes" id="UP000059680">
    <property type="component" value="Chromosome 3"/>
</dbReference>
<dbReference type="GO" id="GO:0000228">
    <property type="term" value="C:nuclear chromosome"/>
    <property type="evidence" value="ECO:0000318"/>
    <property type="project" value="GO_Central"/>
</dbReference>
<dbReference type="GO" id="GO:0005524">
    <property type="term" value="F:ATP binding"/>
    <property type="evidence" value="ECO:0007669"/>
    <property type="project" value="InterPro"/>
</dbReference>
<dbReference type="GO" id="GO:0003677">
    <property type="term" value="F:DNA binding"/>
    <property type="evidence" value="ECO:0000318"/>
    <property type="project" value="GO_Central"/>
</dbReference>
<dbReference type="GO" id="GO:0003918">
    <property type="term" value="F:DNA topoisomerase type II (double strand cut, ATP-hydrolyzing) activity"/>
    <property type="evidence" value="ECO:0007669"/>
    <property type="project" value="InterPro"/>
</dbReference>
<dbReference type="GO" id="GO:0046872">
    <property type="term" value="F:metal ion binding"/>
    <property type="evidence" value="ECO:0007669"/>
    <property type="project" value="UniProtKB-KW"/>
</dbReference>
<dbReference type="GO" id="GO:0051026">
    <property type="term" value="P:chiasma assembly"/>
    <property type="evidence" value="ECO:0007669"/>
    <property type="project" value="EnsemblPlants"/>
</dbReference>
<dbReference type="GO" id="GO:0000724">
    <property type="term" value="P:double-strand break repair via homologous recombination"/>
    <property type="evidence" value="ECO:0000315"/>
    <property type="project" value="UniProtKB"/>
</dbReference>
<dbReference type="GO" id="GO:0042138">
    <property type="term" value="P:meiotic DNA double-strand break formation"/>
    <property type="evidence" value="ECO:0000318"/>
    <property type="project" value="GO_Central"/>
</dbReference>
<dbReference type="GO" id="GO:0000706">
    <property type="term" value="P:meiotic DNA double-strand break processing"/>
    <property type="evidence" value="ECO:0000318"/>
    <property type="project" value="GO_Central"/>
</dbReference>
<dbReference type="GO" id="GO:0007131">
    <property type="term" value="P:reciprocal meiotic recombination"/>
    <property type="evidence" value="ECO:0000315"/>
    <property type="project" value="UniProtKB"/>
</dbReference>
<dbReference type="CDD" id="cd00223">
    <property type="entry name" value="TOPRIM_TopoIIB_SPO"/>
    <property type="match status" value="1"/>
</dbReference>
<dbReference type="FunFam" id="3.40.1360.10:FF:000003">
    <property type="entry name" value="DNA topoisomerase 6 subunit A"/>
    <property type="match status" value="1"/>
</dbReference>
<dbReference type="FunFam" id="1.10.10.10:FF:000778">
    <property type="entry name" value="Meiotic recombination protein SPO11-1"/>
    <property type="match status" value="1"/>
</dbReference>
<dbReference type="Gene3D" id="3.40.1360.10">
    <property type="match status" value="1"/>
</dbReference>
<dbReference type="Gene3D" id="1.10.10.10">
    <property type="entry name" value="Winged helix-like DNA-binding domain superfamily/Winged helix DNA-binding domain"/>
    <property type="match status" value="1"/>
</dbReference>
<dbReference type="InterPro" id="IPR013048">
    <property type="entry name" value="Meiotic_Spo11"/>
</dbReference>
<dbReference type="InterPro" id="IPR002815">
    <property type="entry name" value="Spo11/TopoVI_A"/>
</dbReference>
<dbReference type="InterPro" id="IPR013049">
    <property type="entry name" value="Spo11/TopoVI_A_N"/>
</dbReference>
<dbReference type="InterPro" id="IPR036078">
    <property type="entry name" value="Spo11/TopoVI_A_sf"/>
</dbReference>
<dbReference type="InterPro" id="IPR034136">
    <property type="entry name" value="TOPRIM_Topo6A/Spo11"/>
</dbReference>
<dbReference type="InterPro" id="IPR036388">
    <property type="entry name" value="WH-like_DNA-bd_sf"/>
</dbReference>
<dbReference type="PANTHER" id="PTHR10848">
    <property type="entry name" value="MEIOTIC RECOMBINATION PROTEIN SPO11"/>
    <property type="match status" value="1"/>
</dbReference>
<dbReference type="PANTHER" id="PTHR10848:SF3">
    <property type="entry name" value="MEIOTIC RECOMBINATION PROTEIN SPO11-1"/>
    <property type="match status" value="1"/>
</dbReference>
<dbReference type="Pfam" id="PF21180">
    <property type="entry name" value="TOP6A-Spo11_Toprim"/>
    <property type="match status" value="1"/>
</dbReference>
<dbReference type="Pfam" id="PF04406">
    <property type="entry name" value="TP6A_N"/>
    <property type="match status" value="1"/>
</dbReference>
<dbReference type="PRINTS" id="PR01551">
    <property type="entry name" value="SPO11HOMOLOG"/>
</dbReference>
<dbReference type="PRINTS" id="PR01550">
    <property type="entry name" value="TOP6AFAMILY"/>
</dbReference>
<dbReference type="SUPFAM" id="SSF56726">
    <property type="entry name" value="DNA topoisomerase IV, alpha subunit"/>
    <property type="match status" value="1"/>
</dbReference>
<dbReference type="PROSITE" id="PS52041">
    <property type="entry name" value="TOPO_IIB"/>
    <property type="match status" value="1"/>
</dbReference>
<keyword id="KW-0238">DNA-binding</keyword>
<keyword id="KW-0413">Isomerase</keyword>
<keyword id="KW-0460">Magnesium</keyword>
<keyword id="KW-0479">Metal-binding</keyword>
<keyword id="KW-0539">Nucleus</keyword>
<keyword id="KW-1185">Reference proteome</keyword>
<keyword id="KW-0799">Topoisomerase</keyword>
<accession>Q7Y021</accession>
<accession>A0A0P0W3J0</accession>